<reference key="1">
    <citation type="journal article" date="1999" name="J. Bacteriol.">
        <title>Acetyl coenzyme A synthetase (ADP forming) from the hyperthermophilic Archaeon pyrococcus furiosus: identification, cloning, separate expression of the encoding genes, acdAI and acdBI, in Escherichia coli, and in vitro reconstitution of the active heterotetrameric enzyme from its recombinant subunits.</title>
        <authorList>
            <person name="Musfeldt M."/>
            <person name="Selig M."/>
            <person name="Schonheit P."/>
        </authorList>
    </citation>
    <scope>NUCLEOTIDE SEQUENCE [GENOMIC DNA]</scope>
    <scope>FUNCTION</scope>
    <scope>CATALYTIC ACTIVITY</scope>
    <scope>SUBUNIT</scope>
    <scope>GENE NAME</scope>
</reference>
<reference key="2">
    <citation type="journal article" date="1999" name="Genetics">
        <title>Divergence of the hyperthermophilic archaea Pyrococcus furiosus and P. horikoshii inferred from complete genomic sequences.</title>
        <authorList>
            <person name="Maeder D.L."/>
            <person name="Weiss R.B."/>
            <person name="Dunn D.M."/>
            <person name="Cherry J.L."/>
            <person name="Gonzalez J.M."/>
            <person name="DiRuggiero J."/>
            <person name="Robb F.T."/>
        </authorList>
    </citation>
    <scope>NUCLEOTIDE SEQUENCE [LARGE SCALE GENOMIC DNA]</scope>
    <source>
        <strain>ATCC 43587 / DSM 3638 / JCM 8422 / Vc1</strain>
    </source>
</reference>
<reference key="3">
    <citation type="journal article" date="1996" name="J. Bacteriol.">
        <title>Purification and characterization of two reversible and ADP-dependent acetyl coenzyme A synthetases from the hyperthermophilic archaeon Pyrococcus furiosus.</title>
        <authorList>
            <person name="Mai X."/>
            <person name="Adams M.W."/>
        </authorList>
    </citation>
    <scope>PROTEIN SEQUENCE OF 1-27</scope>
    <scope>FUNCTION</scope>
    <scope>CATALYTIC ACTIVITY</scope>
    <scope>BIOPHYSICOCHEMICAL PROPERTIES</scope>
    <scope>SUBUNIT</scope>
    <source>
        <strain>ATCC 43587 / DSM 3638 / JCM 8422 / Vc1</strain>
    </source>
</reference>
<reference key="4">
    <citation type="journal article" date="1997" name="Eur. J. Biochem.">
        <title>Purification and properties of acetyl-CoA synthetase (ADP-forming), an archaeal enzyme of acetate formation and ATP synthesis, from the hyperthermophile Pyrococcus furiosus.</title>
        <authorList>
            <person name="Glasemacher J."/>
            <person name="Bock A.K."/>
            <person name="Schmid R."/>
            <person name="Schoenheit P."/>
        </authorList>
    </citation>
    <scope>PROTEIN SEQUENCE OF 1-24</scope>
    <scope>FUNCTION</scope>
    <scope>CATALYTIC ACTIVITY</scope>
    <scope>ACTIVITY REGULATION</scope>
    <scope>BIOPHYSICOCHEMICAL PROPERTIES</scope>
    <scope>SUBUNIT</scope>
    <scope>SUBCELLULAR LOCATION</scope>
    <source>
        <strain>ATCC 43587 / DSM 3638 / JCM 8422 / Vc1</strain>
    </source>
</reference>
<proteinExistence type="evidence at protein level"/>
<sequence>MDRVAKAREIIEKAKAENRPLVEPEAKEILKLYGIPVPEFKVARNEEEAVKFSGEIGYPVVMKIVSPQIIHKSDAGGVKINIKNDEEAREAFRTIMQNARNYKPDADLWGVIIYRMLPLGREVIVGMIRDPQFGPAVMFGLGGIFVEILKDVSFRVAPITKEDALEMIREIKAYPILAGARGEKPVNIEALADIIVKVGELALELPEIKEIDINPIFAYEDSAIAVDARMIL</sequence>
<organism>
    <name type="scientific">Pyrococcus furiosus (strain ATCC 43587 / DSM 3638 / JCM 8422 / Vc1)</name>
    <dbReference type="NCBI Taxonomy" id="186497"/>
    <lineage>
        <taxon>Archaea</taxon>
        <taxon>Methanobacteriati</taxon>
        <taxon>Methanobacteriota</taxon>
        <taxon>Thermococci</taxon>
        <taxon>Thermococcales</taxon>
        <taxon>Thermococcaceae</taxon>
        <taxon>Pyrococcus</taxon>
    </lineage>
</organism>
<feature type="chain" id="PRO_0000430521" description="Acetate--CoA ligase [ADP-forming] I subunit beta">
    <location>
        <begin position="1"/>
        <end position="232"/>
    </location>
</feature>
<feature type="domain" description="ATP-grasp" evidence="1">
    <location>
        <begin position="27"/>
        <end position="63"/>
    </location>
</feature>
<feature type="binding site" evidence="1">
    <location>
        <begin position="53"/>
        <end position="64"/>
    </location>
    <ligand>
        <name>ATP</name>
        <dbReference type="ChEBI" id="CHEBI:30616"/>
    </ligand>
</feature>
<feature type="sequence conflict" description="In Ref. 4; AA sequence." evidence="6" ref="4">
    <original>P</original>
    <variation>R</variation>
    <location>
        <position position="20"/>
    </location>
</feature>
<feature type="sequence conflict" description="In Ref. 3; AA sequence." evidence="6" ref="3">
    <original>E</original>
    <variation>Q</variation>
    <location>
        <position position="23"/>
    </location>
</feature>
<feature type="sequence conflict" description="In Ref. 3; AA sequence." evidence="6" ref="3">
    <original>E</original>
    <variation>A</variation>
    <location>
        <position position="25"/>
    </location>
</feature>
<protein>
    <recommendedName>
        <fullName evidence="6">Acetate--CoA ligase [ADP-forming] I subunit beta</fullName>
        <ecNumber evidence="2 3 4">6.2.1.13</ecNumber>
    </recommendedName>
    <alternativeName>
        <fullName evidence="6">ADP-forming acetyl coenzyme A synthetase I subunit beta</fullName>
        <shortName evidence="6">ACS I subunit beta</shortName>
    </alternativeName>
</protein>
<evidence type="ECO:0000255" key="1">
    <source>
        <dbReference type="PROSITE-ProRule" id="PRU00409"/>
    </source>
</evidence>
<evidence type="ECO:0000269" key="2">
    <source>
    </source>
</evidence>
<evidence type="ECO:0000269" key="3">
    <source>
    </source>
</evidence>
<evidence type="ECO:0000269" key="4">
    <source>
    </source>
</evidence>
<evidence type="ECO:0000303" key="5">
    <source>
    </source>
</evidence>
<evidence type="ECO:0000305" key="6"/>
<evidence type="ECO:0000312" key="7">
    <source>
        <dbReference type="EMBL" id="AAL81911.1"/>
    </source>
</evidence>
<gene>
    <name evidence="5" type="primary">acdBI</name>
    <name evidence="7" type="ordered locus">PF1787</name>
</gene>
<keyword id="KW-0067">ATP-binding</keyword>
<keyword id="KW-0963">Cytoplasm</keyword>
<keyword id="KW-0903">Direct protein sequencing</keyword>
<keyword id="KW-0436">Ligase</keyword>
<keyword id="KW-0547">Nucleotide-binding</keyword>
<keyword id="KW-1185">Reference proteome</keyword>
<dbReference type="EC" id="6.2.1.13" evidence="2 3 4"/>
<dbReference type="EMBL" id="AJ240062">
    <property type="protein sequence ID" value="CAB46517.1"/>
    <property type="molecule type" value="Genomic_DNA"/>
</dbReference>
<dbReference type="EMBL" id="AE009950">
    <property type="protein sequence ID" value="AAL81911.1"/>
    <property type="molecule type" value="Genomic_DNA"/>
</dbReference>
<dbReference type="PIR" id="T48662">
    <property type="entry name" value="T48662"/>
</dbReference>
<dbReference type="RefSeq" id="WP_011012928.1">
    <property type="nucleotide sequence ID" value="NZ_CP023154.1"/>
</dbReference>
<dbReference type="SMR" id="E7FHP1"/>
<dbReference type="STRING" id="186497.PF1787"/>
<dbReference type="PaxDb" id="186497-PF1787"/>
<dbReference type="GeneID" id="41713605"/>
<dbReference type="KEGG" id="pfu:PF1787"/>
<dbReference type="PATRIC" id="fig|186497.12.peg.1858"/>
<dbReference type="eggNOG" id="arCOG01338">
    <property type="taxonomic scope" value="Archaea"/>
</dbReference>
<dbReference type="HOGENOM" id="CLU_063044_1_1_2"/>
<dbReference type="OrthoDB" id="18103at2157"/>
<dbReference type="PhylomeDB" id="E7FHP1"/>
<dbReference type="BioCyc" id="MetaCyc:MONOMER-11823"/>
<dbReference type="BRENDA" id="6.2.1.13">
    <property type="organism ID" value="5243"/>
</dbReference>
<dbReference type="SABIO-RK" id="E7FHP1"/>
<dbReference type="Proteomes" id="UP000001013">
    <property type="component" value="Chromosome"/>
</dbReference>
<dbReference type="GO" id="GO:0005737">
    <property type="term" value="C:cytoplasm"/>
    <property type="evidence" value="ECO:0007669"/>
    <property type="project" value="UniProtKB-SubCell"/>
</dbReference>
<dbReference type="GO" id="GO:0043758">
    <property type="term" value="F:acetate-CoA ligase (ADP-forming) activity"/>
    <property type="evidence" value="ECO:0007669"/>
    <property type="project" value="UniProtKB-EC"/>
</dbReference>
<dbReference type="GO" id="GO:0005524">
    <property type="term" value="F:ATP binding"/>
    <property type="evidence" value="ECO:0007669"/>
    <property type="project" value="UniProtKB-KW"/>
</dbReference>
<dbReference type="GO" id="GO:0046872">
    <property type="term" value="F:metal ion binding"/>
    <property type="evidence" value="ECO:0007669"/>
    <property type="project" value="InterPro"/>
</dbReference>
<dbReference type="FunFam" id="3.30.1490.20:FF:000020">
    <property type="entry name" value="Protein lysine acetyltransferase"/>
    <property type="match status" value="1"/>
</dbReference>
<dbReference type="Gene3D" id="3.30.1490.20">
    <property type="entry name" value="ATP-grasp fold, A domain"/>
    <property type="match status" value="1"/>
</dbReference>
<dbReference type="Gene3D" id="3.30.470.20">
    <property type="entry name" value="ATP-grasp fold, B domain"/>
    <property type="match status" value="1"/>
</dbReference>
<dbReference type="InterPro" id="IPR051538">
    <property type="entry name" value="Acyl-CoA_Synth/Transferase"/>
</dbReference>
<dbReference type="InterPro" id="IPR011761">
    <property type="entry name" value="ATP-grasp"/>
</dbReference>
<dbReference type="InterPro" id="IPR013815">
    <property type="entry name" value="ATP_grasp_subdomain_1"/>
</dbReference>
<dbReference type="PANTHER" id="PTHR43334:SF1">
    <property type="entry name" value="3-HYDROXYPROPIONATE--COA LIGASE [ADP-FORMING]"/>
    <property type="match status" value="1"/>
</dbReference>
<dbReference type="PANTHER" id="PTHR43334">
    <property type="entry name" value="ACETATE--COA LIGASE [ADP-FORMING]"/>
    <property type="match status" value="1"/>
</dbReference>
<dbReference type="Pfam" id="PF13549">
    <property type="entry name" value="ATP-grasp_5"/>
    <property type="match status" value="1"/>
</dbReference>
<dbReference type="SUPFAM" id="SSF56059">
    <property type="entry name" value="Glutathione synthetase ATP-binding domain-like"/>
    <property type="match status" value="1"/>
</dbReference>
<dbReference type="PROSITE" id="PS50975">
    <property type="entry name" value="ATP_GRASP"/>
    <property type="match status" value="1"/>
</dbReference>
<accession>E7FHP1</accession>
<accession>Q7LWX9</accession>
<accession>Q9Y8L0</accession>
<comment type="function">
    <text evidence="2 3 4">Catalyzes the reversible formation of acetate and ATP from acetyl-CoA by using ADP and phosphate. Can use other substrates such as isobutyryl-CoA, propionyl-CoA and butyryl-CoA, but not indoleacetyl-CoA, phenylacetyl-CoA or succinyl-CoA. Seems to be involved primarily in the conversion of acetyl-CoA to acetate. Participates in the degradation of branched-chain amino acids via branched-chain-acyl-CoA esters.</text>
</comment>
<comment type="catalytic activity">
    <reaction evidence="2 3 4">
        <text>acetate + ATP + CoA = acetyl-CoA + ADP + phosphate</text>
        <dbReference type="Rhea" id="RHEA:15081"/>
        <dbReference type="ChEBI" id="CHEBI:30089"/>
        <dbReference type="ChEBI" id="CHEBI:30616"/>
        <dbReference type="ChEBI" id="CHEBI:43474"/>
        <dbReference type="ChEBI" id="CHEBI:57287"/>
        <dbReference type="ChEBI" id="CHEBI:57288"/>
        <dbReference type="ChEBI" id="CHEBI:456216"/>
        <dbReference type="EC" id="6.2.1.13"/>
    </reaction>
</comment>
<comment type="activity regulation">
    <text evidence="4">Activity is dependent on magnesium.</text>
</comment>
<comment type="biophysicochemical properties">
    <kinetics>
        <KM evidence="3">150 uM for ADP (at 80 degrees Celsius)</KM>
        <KM evidence="4">60 uM for ADP (at 55 degrees Celsius)</KM>
        <KM evidence="3">132 uM for GDP (at 80 degrees Celsius)</KM>
        <KM evidence="3">396 uM for phosphate (at 80 degrees Celsius)</KM>
        <KM evidence="4">200 uM for phosphate (at 55 degrees Celsius)</KM>
        <KM evidence="3">25 uM for acetyl-CoA (at 80 degrees Celsius)</KM>
        <KM evidence="4">17 uM for acetyl-CoA (at 55 degrees Celsius)</KM>
        <KM evidence="3">29 uM for isobutyryl-CoA (at 80 degrees Celsius)</KM>
        <KM evidence="3">477 uM for ATP (at 80 degrees Celsius)</KM>
        <KM evidence="4">80 uM for ATP (at 55 degrees Celsius)</KM>
        <KM evidence="3">430 uM for GTP (at 80 degrees Celsius)</KM>
        <KM evidence="3">18 uM for CoA (at 80 degrees Celsius)</KM>
        <KM evidence="4">30 uM for CoA (at 55 degrees Celsius)</KM>
        <KM evidence="3">1100 uM for acetate (at 80 degrees Celsius)</KM>
        <KM evidence="4">660 uM for acetate (at 55 degrees Celsius)</KM>
        <KM evidence="3">457 uM for isobutyrate (at 80 degrees Celsius)</KM>
        <text evidence="3">kcat is 203 sec(-1) for ADP. kcat is 411 sec(-1) for GDP. kcat is 182 sec(-1) for phosphate. kcat is 157 sec(-1) for acetyl-CoA. kcat is 121 sec(-1) for isobutyryl-CoA. kcat is 82 sec(-1) for ATP. kcat is 121 sec(-1) for GTP. kcat is 73 sec(-1) for CoA. kcat is 65 sec(-1) for acetate. kcat is 55 sec(-1) for isobutyrate.</text>
    </kinetics>
    <phDependence>
        <text evidence="3 4">Optimum pH is 9.0 (at 80 degrees Celsius) (PubMed:8830684). Optimum pH is 7.0 (at 55 degrees Celsius) (PubMed:9119024).</text>
    </phDependence>
    <temperatureDependence>
        <text evidence="3 4">Optimum temperature is above 90 degrees Celsius.</text>
    </temperatureDependence>
</comment>
<comment type="subunit">
    <text evidence="2 3 4">Heterotetramer of two alpha and two beta subunits.</text>
</comment>
<comment type="subcellular location">
    <subcellularLocation>
        <location evidence="4">Cytoplasm</location>
    </subcellularLocation>
</comment>
<comment type="similarity">
    <text evidence="6">Belongs to the acetate CoA ligase beta subunit family.</text>
</comment>
<name>ACDB1_PYRFU</name>